<comment type="function">
    <text evidence="1">Escorts unspliced or incompletely spliced viral pre-mRNAs (late transcripts) out of the nucleus of infected cells. These pre-mRNAs carry a recognition sequence called Rev responsive element (RRE) located in the env gene, that is not present in fully spliced viral mRNAs (early transcripts). This function is essential since most viral proteins are translated from unspliced or partially spliced pre-mRNAs which cannot exit the nucleus by the pathway used by fully processed cellular mRNAs (By similarity).</text>
</comment>
<comment type="subunit">
    <text evidence="1">Homomultimer; when bound to the RRE. Multimeric assembly is essential for activity (By similarity).</text>
</comment>
<comment type="subcellular location">
    <subcellularLocation>
        <location>Host nucleus</location>
        <location>Host nucleolus</location>
    </subcellularLocation>
    <subcellularLocation>
        <location>Host cytoplasm</location>
    </subcellularLocation>
    <text evidence="1">The presence of both nuclear import and nuclear export signals leads to continuous shuttling between the nucleus and cytoplasm.</text>
</comment>
<comment type="domain">
    <text evidence="1">The RNA-binding motif binds to the RRE, a stem-and-loop structure present in incompletely spliced viral pre-mRNAs. This region also contains the NLS which mediates nuclear localization. These overlapping functions prevent Rev bound to RRE from undesirable return to the nucleus. When Rev binds the RRE, the NLS becomes masked while the NES remains accessible (By similarity).</text>
</comment>
<keyword id="KW-1035">Host cytoplasm</keyword>
<keyword id="KW-1048">Host nucleus</keyword>
<keyword id="KW-0509">mRNA transport</keyword>
<keyword id="KW-0694">RNA-binding</keyword>
<keyword id="KW-0813">Transport</keyword>
<proteinExistence type="inferred from homology"/>
<gene>
    <name type="primary">rev</name>
</gene>
<dbReference type="EMBL" id="M66437">
    <property type="protein sequence ID" value="AAA91927.2"/>
    <property type="molecule type" value="Genomic_DNA"/>
</dbReference>
<dbReference type="EMBL" id="M58410">
    <property type="status" value="NOT_ANNOTATED_CDS"/>
    <property type="molecule type" value="Genomic_RNA"/>
</dbReference>
<dbReference type="SMR" id="Q02839"/>
<dbReference type="Proteomes" id="UP000201112">
    <property type="component" value="Segment"/>
</dbReference>
<dbReference type="Proteomes" id="UP000257419">
    <property type="component" value="Segment"/>
</dbReference>
<dbReference type="GO" id="GO:0030430">
    <property type="term" value="C:host cell cytoplasm"/>
    <property type="evidence" value="ECO:0007669"/>
    <property type="project" value="UniProtKB-SubCell"/>
</dbReference>
<dbReference type="GO" id="GO:0044196">
    <property type="term" value="C:host cell nucleolus"/>
    <property type="evidence" value="ECO:0007669"/>
    <property type="project" value="UniProtKB-SubCell"/>
</dbReference>
<dbReference type="GO" id="GO:0003700">
    <property type="term" value="F:DNA-binding transcription factor activity"/>
    <property type="evidence" value="ECO:0007669"/>
    <property type="project" value="InterPro"/>
</dbReference>
<dbReference type="GO" id="GO:0003723">
    <property type="term" value="F:RNA binding"/>
    <property type="evidence" value="ECO:0007669"/>
    <property type="project" value="UniProtKB-KW"/>
</dbReference>
<dbReference type="GO" id="GO:0051028">
    <property type="term" value="P:mRNA transport"/>
    <property type="evidence" value="ECO:0007669"/>
    <property type="project" value="UniProtKB-KW"/>
</dbReference>
<dbReference type="Gene3D" id="6.10.140.630">
    <property type="match status" value="1"/>
</dbReference>
<dbReference type="InterPro" id="IPR000625">
    <property type="entry name" value="REV_protein"/>
</dbReference>
<dbReference type="Pfam" id="PF00424">
    <property type="entry name" value="REV"/>
    <property type="match status" value="1"/>
</dbReference>
<sequence>MSLGKEEKQALKIIKTLYGSNPYPQFSGTARQRRRARQRWRKQQQQIDKIAGRVLNTFEDQQLVAQLQELQLENKDLVLQHLPDPPHIHQDSSGIPAVWAPATPRGSNRACSSSGEGCEGSLGQTGCYCPIRLSGSHQQSKKSAARP</sequence>
<evidence type="ECO:0000250" key="1"/>
<evidence type="ECO:0000256" key="2">
    <source>
        <dbReference type="SAM" id="MobiDB-lite"/>
    </source>
</evidence>
<organism>
    <name type="scientific">Simian immunodeficiency virus agm.grivet (isolate AGM gr-1)</name>
    <name type="common">SIV-agm.gri</name>
    <name type="synonym">Simian immunodeficiency virus African green monkey grivet</name>
    <dbReference type="NCBI Taxonomy" id="31684"/>
    <lineage>
        <taxon>Viruses</taxon>
        <taxon>Riboviria</taxon>
        <taxon>Pararnavirae</taxon>
        <taxon>Artverviricota</taxon>
        <taxon>Revtraviricetes</taxon>
        <taxon>Ortervirales</taxon>
        <taxon>Retroviridae</taxon>
        <taxon>Orthoretrovirinae</taxon>
        <taxon>Lentivirus</taxon>
        <taxon>Simian immunodeficiency virus</taxon>
    </lineage>
</organism>
<reference key="1">
    <citation type="journal article" date="1991" name="Virology">
        <title>A highly divergent proviral DNA clone of SIV from a distinct species of African green monkey.</title>
        <authorList>
            <person name="Fomsgaard A."/>
            <person name="Hirsch V.M."/>
            <person name="Allan J.S."/>
            <person name="Johnson P.R."/>
        </authorList>
    </citation>
    <scope>NUCLEOTIDE SEQUENCE [GENOMIC DNA]</scope>
</reference>
<reference key="2">
    <citation type="submission" date="2001-04" db="EMBL/GenBank/DDBJ databases">
        <authorList>
            <person name="Fomsgaard A."/>
            <person name="Hirsch V.M."/>
            <person name="Allan J.S."/>
            <person name="Johnson P.R."/>
        </authorList>
    </citation>
    <scope>SEQUENCE REVISION TO 21-22</scope>
</reference>
<accession>Q02839</accession>
<organismHost>
    <name type="scientific">Cercopithecidae</name>
    <name type="common">Old World monkeys</name>
    <dbReference type="NCBI Taxonomy" id="9527"/>
</organismHost>
<name>REV_SIVG1</name>
<protein>
    <recommendedName>
        <fullName>Protein Rev</fullName>
    </recommendedName>
    <alternativeName>
        <fullName>Regulator of expression of viral proteins</fullName>
    </alternativeName>
</protein>
<feature type="chain" id="PRO_0000085293" description="Protein Rev">
    <location>
        <begin position="1"/>
        <end position="147"/>
    </location>
</feature>
<feature type="region of interest" description="Homomultimerization" evidence="1">
    <location>
        <begin position="13"/>
        <end position="21"/>
    </location>
</feature>
<feature type="region of interest" description="Disordered" evidence="2">
    <location>
        <begin position="24"/>
        <end position="44"/>
    </location>
</feature>
<feature type="region of interest" description="Disordered" evidence="2">
    <location>
        <begin position="83"/>
        <end position="120"/>
    </location>
</feature>
<feature type="short sequence motif" description="Nuclear localization signal and RNA-binding (RRE)" evidence="1">
    <location>
        <begin position="29"/>
        <end position="45"/>
    </location>
</feature>
<feature type="short sequence motif" description="Nuclear export signal" evidence="1">
    <location>
        <begin position="70"/>
        <end position="82"/>
    </location>
</feature>
<feature type="compositionally biased region" description="Basic residues" evidence="2">
    <location>
        <begin position="31"/>
        <end position="42"/>
    </location>
</feature>
<feature type="compositionally biased region" description="Low complexity" evidence="2">
    <location>
        <begin position="111"/>
        <end position="120"/>
    </location>
</feature>